<feature type="chain" id="PRO_1000140999" description="Small ribosomal subunit protein uS3">
    <location>
        <begin position="1"/>
        <end position="249"/>
    </location>
</feature>
<feature type="domain" description="KH type-2" evidence="1">
    <location>
        <begin position="39"/>
        <end position="109"/>
    </location>
</feature>
<feature type="region of interest" description="Disordered" evidence="2">
    <location>
        <begin position="226"/>
        <end position="249"/>
    </location>
</feature>
<feature type="compositionally biased region" description="Basic and acidic residues" evidence="2">
    <location>
        <begin position="226"/>
        <end position="239"/>
    </location>
</feature>
<feature type="compositionally biased region" description="Basic residues" evidence="2">
    <location>
        <begin position="240"/>
        <end position="249"/>
    </location>
</feature>
<accession>B4SBV3</accession>
<evidence type="ECO:0000255" key="1">
    <source>
        <dbReference type="HAMAP-Rule" id="MF_01309"/>
    </source>
</evidence>
<evidence type="ECO:0000256" key="2">
    <source>
        <dbReference type="SAM" id="MobiDB-lite"/>
    </source>
</evidence>
<evidence type="ECO:0000305" key="3"/>
<name>RS3_PELPB</name>
<keyword id="KW-1185">Reference proteome</keyword>
<keyword id="KW-0687">Ribonucleoprotein</keyword>
<keyword id="KW-0689">Ribosomal protein</keyword>
<keyword id="KW-0694">RNA-binding</keyword>
<keyword id="KW-0699">rRNA-binding</keyword>
<dbReference type="EMBL" id="CP001110">
    <property type="protein sequence ID" value="ACF42628.1"/>
    <property type="molecule type" value="Genomic_DNA"/>
</dbReference>
<dbReference type="RefSeq" id="WP_012507124.1">
    <property type="nucleotide sequence ID" value="NC_011060.1"/>
</dbReference>
<dbReference type="SMR" id="B4SBV3"/>
<dbReference type="STRING" id="324925.Ppha_0295"/>
<dbReference type="KEGG" id="pph:Ppha_0295"/>
<dbReference type="eggNOG" id="COG0092">
    <property type="taxonomic scope" value="Bacteria"/>
</dbReference>
<dbReference type="HOGENOM" id="CLU_058591_0_2_10"/>
<dbReference type="OrthoDB" id="9806396at2"/>
<dbReference type="Proteomes" id="UP000002724">
    <property type="component" value="Chromosome"/>
</dbReference>
<dbReference type="GO" id="GO:0022627">
    <property type="term" value="C:cytosolic small ribosomal subunit"/>
    <property type="evidence" value="ECO:0007669"/>
    <property type="project" value="TreeGrafter"/>
</dbReference>
<dbReference type="GO" id="GO:0003729">
    <property type="term" value="F:mRNA binding"/>
    <property type="evidence" value="ECO:0007669"/>
    <property type="project" value="UniProtKB-UniRule"/>
</dbReference>
<dbReference type="GO" id="GO:0019843">
    <property type="term" value="F:rRNA binding"/>
    <property type="evidence" value="ECO:0007669"/>
    <property type="project" value="UniProtKB-UniRule"/>
</dbReference>
<dbReference type="GO" id="GO:0003735">
    <property type="term" value="F:structural constituent of ribosome"/>
    <property type="evidence" value="ECO:0007669"/>
    <property type="project" value="InterPro"/>
</dbReference>
<dbReference type="GO" id="GO:0006412">
    <property type="term" value="P:translation"/>
    <property type="evidence" value="ECO:0007669"/>
    <property type="project" value="UniProtKB-UniRule"/>
</dbReference>
<dbReference type="CDD" id="cd02412">
    <property type="entry name" value="KH-II_30S_S3"/>
    <property type="match status" value="1"/>
</dbReference>
<dbReference type="FunFam" id="3.30.300.20:FF:000001">
    <property type="entry name" value="30S ribosomal protein S3"/>
    <property type="match status" value="1"/>
</dbReference>
<dbReference type="Gene3D" id="3.30.300.20">
    <property type="match status" value="1"/>
</dbReference>
<dbReference type="Gene3D" id="3.30.1140.32">
    <property type="entry name" value="Ribosomal protein S3, C-terminal domain"/>
    <property type="match status" value="1"/>
</dbReference>
<dbReference type="HAMAP" id="MF_01309_B">
    <property type="entry name" value="Ribosomal_uS3_B"/>
    <property type="match status" value="1"/>
</dbReference>
<dbReference type="InterPro" id="IPR004087">
    <property type="entry name" value="KH_dom"/>
</dbReference>
<dbReference type="InterPro" id="IPR015946">
    <property type="entry name" value="KH_dom-like_a/b"/>
</dbReference>
<dbReference type="InterPro" id="IPR004044">
    <property type="entry name" value="KH_dom_type_2"/>
</dbReference>
<dbReference type="InterPro" id="IPR009019">
    <property type="entry name" value="KH_sf_prok-type"/>
</dbReference>
<dbReference type="InterPro" id="IPR036419">
    <property type="entry name" value="Ribosomal_S3_C_sf"/>
</dbReference>
<dbReference type="InterPro" id="IPR005704">
    <property type="entry name" value="Ribosomal_uS3_bac-typ"/>
</dbReference>
<dbReference type="InterPro" id="IPR001351">
    <property type="entry name" value="Ribosomal_uS3_C"/>
</dbReference>
<dbReference type="InterPro" id="IPR018280">
    <property type="entry name" value="Ribosomal_uS3_CS"/>
</dbReference>
<dbReference type="NCBIfam" id="TIGR01009">
    <property type="entry name" value="rpsC_bact"/>
    <property type="match status" value="1"/>
</dbReference>
<dbReference type="PANTHER" id="PTHR11760">
    <property type="entry name" value="30S/40S RIBOSOMAL PROTEIN S3"/>
    <property type="match status" value="1"/>
</dbReference>
<dbReference type="PANTHER" id="PTHR11760:SF19">
    <property type="entry name" value="SMALL RIBOSOMAL SUBUNIT PROTEIN US3C"/>
    <property type="match status" value="1"/>
</dbReference>
<dbReference type="Pfam" id="PF07650">
    <property type="entry name" value="KH_2"/>
    <property type="match status" value="1"/>
</dbReference>
<dbReference type="Pfam" id="PF00189">
    <property type="entry name" value="Ribosomal_S3_C"/>
    <property type="match status" value="1"/>
</dbReference>
<dbReference type="SMART" id="SM00322">
    <property type="entry name" value="KH"/>
    <property type="match status" value="1"/>
</dbReference>
<dbReference type="SUPFAM" id="SSF54814">
    <property type="entry name" value="Prokaryotic type KH domain (KH-domain type II)"/>
    <property type="match status" value="1"/>
</dbReference>
<dbReference type="SUPFAM" id="SSF54821">
    <property type="entry name" value="Ribosomal protein S3 C-terminal domain"/>
    <property type="match status" value="1"/>
</dbReference>
<dbReference type="PROSITE" id="PS50823">
    <property type="entry name" value="KH_TYPE_2"/>
    <property type="match status" value="1"/>
</dbReference>
<dbReference type="PROSITE" id="PS00548">
    <property type="entry name" value="RIBOSOMAL_S3"/>
    <property type="match status" value="1"/>
</dbReference>
<reference key="1">
    <citation type="submission" date="2008-06" db="EMBL/GenBank/DDBJ databases">
        <title>Complete sequence of Pelodictyon phaeoclathratiforme BU-1.</title>
        <authorList>
            <consortium name="US DOE Joint Genome Institute"/>
            <person name="Lucas S."/>
            <person name="Copeland A."/>
            <person name="Lapidus A."/>
            <person name="Glavina del Rio T."/>
            <person name="Dalin E."/>
            <person name="Tice H."/>
            <person name="Bruce D."/>
            <person name="Goodwin L."/>
            <person name="Pitluck S."/>
            <person name="Schmutz J."/>
            <person name="Larimer F."/>
            <person name="Land M."/>
            <person name="Hauser L."/>
            <person name="Kyrpides N."/>
            <person name="Mikhailova N."/>
            <person name="Liu Z."/>
            <person name="Li T."/>
            <person name="Zhao F."/>
            <person name="Overmann J."/>
            <person name="Bryant D.A."/>
            <person name="Richardson P."/>
        </authorList>
    </citation>
    <scope>NUCLEOTIDE SEQUENCE [LARGE SCALE GENOMIC DNA]</scope>
    <source>
        <strain>DSM 5477 / BU-1</strain>
    </source>
</reference>
<sequence length="249" mass="28327">MGQKVNPTGFRLGIIRDWASRWYDDSPVISEKIKQDHVIRTYVLARLKKERAGIARIIIERTTKHVKINIYAARPGAVVGRKGEEINNLSQELSRITGKEVKIDVVEVVKPEIEAQLIGDNIAYQLENRVSFRRAMKQAIQQAMRSGAEGVRIRCGGRLGGAEIARSEQYKEGKIPLHTIRANVDYASVTAHTIAGTIGIKVWVYKGEVLVQRIDAIEEDELKRIKERRNDAGARNRDSRTKRRHRTKR</sequence>
<proteinExistence type="inferred from homology"/>
<comment type="function">
    <text evidence="1">Binds the lower part of the 30S subunit head. Binds mRNA in the 70S ribosome, positioning it for translation.</text>
</comment>
<comment type="subunit">
    <text evidence="1">Part of the 30S ribosomal subunit. Forms a tight complex with proteins S10 and S14.</text>
</comment>
<comment type="similarity">
    <text evidence="1">Belongs to the universal ribosomal protein uS3 family.</text>
</comment>
<protein>
    <recommendedName>
        <fullName evidence="1">Small ribosomal subunit protein uS3</fullName>
    </recommendedName>
    <alternativeName>
        <fullName evidence="3">30S ribosomal protein S3</fullName>
    </alternativeName>
</protein>
<organism>
    <name type="scientific">Pelodictyon phaeoclathratiforme (strain DSM 5477 / BU-1)</name>
    <dbReference type="NCBI Taxonomy" id="324925"/>
    <lineage>
        <taxon>Bacteria</taxon>
        <taxon>Pseudomonadati</taxon>
        <taxon>Chlorobiota</taxon>
        <taxon>Chlorobiia</taxon>
        <taxon>Chlorobiales</taxon>
        <taxon>Chlorobiaceae</taxon>
        <taxon>Chlorobium/Pelodictyon group</taxon>
        <taxon>Pelodictyon</taxon>
    </lineage>
</organism>
<gene>
    <name evidence="1" type="primary">rpsC</name>
    <name type="ordered locus">Ppha_0295</name>
</gene>